<protein>
    <recommendedName>
        <fullName evidence="4">Crassicorin-II</fullName>
    </recommendedName>
    <alternativeName>
        <fullName evidence="4">BDS-like antimicrobial peptide</fullName>
        <shortName evidence="4">BDS-like AMP</shortName>
    </alternativeName>
</protein>
<accession>P0DUG3</accession>
<feature type="chain" id="PRO_0000452125" description="Crassicorin-II" evidence="3">
    <location>
        <begin position="1"/>
        <end position="34" status="greater than"/>
    </location>
</feature>
<feature type="disulfide bond" evidence="2">
    <location>
        <begin position="4"/>
        <end status="unknown"/>
    </location>
</feature>
<feature type="disulfide bond" evidence="2">
    <location>
        <begin position="6"/>
        <end position="30"/>
    </location>
</feature>
<feature type="disulfide bond" evidence="2">
    <location>
        <begin position="20"/>
        <end status="unknown"/>
    </location>
</feature>
<feature type="non-terminal residue">
    <location>
        <position position="34"/>
    </location>
</feature>
<sequence length="34" mass="3792">GASCDCHPFKGTYWFGTSNCPSGHGYRKKCDSFF</sequence>
<comment type="function">
    <text evidence="1">Peptide with both antimicrobial and neurotoxin activities. Cationic AMP with antimicrobial activity against both Gram-positive bacteria (B.subtilis) and Gram-negative bacteria (E.coli and S.enterica). Shows no significant antimicrobial activity against bacteria S.aureus and P.aeruginosa, as well as the fungus C.albicans. In vivo, induces reversible paralytic activity towards the shrimp P.paucidens. May act by impairing sodium or potassium channels in the prey.</text>
</comment>
<comment type="subcellular location">
    <subcellularLocation>
        <location evidence="3">Secreted</location>
    </subcellularLocation>
    <subcellularLocation>
        <location evidence="1">Nematocyst</location>
    </subcellularLocation>
</comment>
<comment type="tissue specificity">
    <text evidence="1">Highly expressed by the mesenteries. Moderately expressed by the pharynx. Weakly expressed by the gonad and pedal disk. No expression in tentacle.</text>
</comment>
<comment type="mass spectrometry" mass="4386.4" method="MALDI" evidence="3"/>
<comment type="similarity">
    <text evidence="5">Belongs to the sea anemone type 3 (BDS) potassium channel toxin family.</text>
</comment>
<dbReference type="SMR" id="P0DUG3"/>
<dbReference type="GO" id="GO:0005576">
    <property type="term" value="C:extracellular region"/>
    <property type="evidence" value="ECO:0007669"/>
    <property type="project" value="UniProtKB-SubCell"/>
</dbReference>
<dbReference type="GO" id="GO:0042151">
    <property type="term" value="C:nematocyst"/>
    <property type="evidence" value="ECO:0007669"/>
    <property type="project" value="UniProtKB-SubCell"/>
</dbReference>
<dbReference type="GO" id="GO:0008200">
    <property type="term" value="F:ion channel inhibitor activity"/>
    <property type="evidence" value="ECO:0007669"/>
    <property type="project" value="InterPro"/>
</dbReference>
<dbReference type="GO" id="GO:0090729">
    <property type="term" value="F:toxin activity"/>
    <property type="evidence" value="ECO:0007669"/>
    <property type="project" value="UniProtKB-KW"/>
</dbReference>
<dbReference type="GO" id="GO:0042742">
    <property type="term" value="P:defense response to bacterium"/>
    <property type="evidence" value="ECO:0007669"/>
    <property type="project" value="UniProtKB-KW"/>
</dbReference>
<dbReference type="GO" id="GO:0045087">
    <property type="term" value="P:innate immune response"/>
    <property type="evidence" value="ECO:0007669"/>
    <property type="project" value="UniProtKB-KW"/>
</dbReference>
<dbReference type="Gene3D" id="2.20.20.10">
    <property type="entry name" value="Anthopleurin-A"/>
    <property type="match status" value="1"/>
</dbReference>
<dbReference type="InterPro" id="IPR012414">
    <property type="entry name" value="BDS_K_chnl_tox"/>
</dbReference>
<dbReference type="InterPro" id="IPR023355">
    <property type="entry name" value="Myo_ane_neurotoxin_sf"/>
</dbReference>
<dbReference type="Pfam" id="PF07936">
    <property type="entry name" value="Defensin_4"/>
    <property type="match status" value="1"/>
</dbReference>
<name>BDS2_URTCR</name>
<proteinExistence type="evidence at protein level"/>
<evidence type="ECO:0000250" key="1">
    <source>
        <dbReference type="UniProtKB" id="A0A1X9QHL1"/>
    </source>
</evidence>
<evidence type="ECO:0000250" key="2">
    <source>
        <dbReference type="UniProtKB" id="P61541"/>
    </source>
</evidence>
<evidence type="ECO:0000269" key="3">
    <source>
    </source>
</evidence>
<evidence type="ECO:0000303" key="4">
    <source>
    </source>
</evidence>
<evidence type="ECO:0000305" key="5"/>
<organism>
    <name type="scientific">Urticina crassicornis</name>
    <name type="common">Mottled anemone</name>
    <name type="synonym">Tealia crassicornis</name>
    <dbReference type="NCBI Taxonomy" id="45621"/>
    <lineage>
        <taxon>Eukaryota</taxon>
        <taxon>Metazoa</taxon>
        <taxon>Cnidaria</taxon>
        <taxon>Anthozoa</taxon>
        <taxon>Hexacorallia</taxon>
        <taxon>Actiniaria</taxon>
        <taxon>Actiniidae</taxon>
        <taxon>Urticina</taxon>
    </lineage>
</organism>
<reference key="1">
    <citation type="journal article" date="2017" name="FEBS J.">
        <title>Defensin-neurotoxin dyad in a basally branching metazoan sea anemone.</title>
        <authorList>
            <person name="Kim C.H."/>
            <person name="Lee Y.J."/>
            <person name="Go H.J."/>
            <person name="Oh H.Y."/>
            <person name="Lee T.K."/>
            <person name="Park J.B."/>
            <person name="Park N.G."/>
        </authorList>
    </citation>
    <scope>PROTEIN SEQUENCE</scope>
    <scope>MASS SPECTROMETRY</scope>
    <scope>SUBCELLULAR LOCATION</scope>
</reference>
<keyword id="KW-0044">Antibiotic</keyword>
<keyword id="KW-0929">Antimicrobial</keyword>
<keyword id="KW-0165">Cleavage on pair of basic residues</keyword>
<keyword id="KW-0903">Direct protein sequencing</keyword>
<keyword id="KW-1015">Disulfide bond</keyword>
<keyword id="KW-0391">Immunity</keyword>
<keyword id="KW-0399">Innate immunity</keyword>
<keyword id="KW-0872">Ion channel impairing toxin</keyword>
<keyword id="KW-0166">Nematocyst</keyword>
<keyword id="KW-0528">Neurotoxin</keyword>
<keyword id="KW-0964">Secreted</keyword>
<keyword id="KW-0800">Toxin</keyword>